<keyword id="KW-0021">Allosteric enzyme</keyword>
<keyword id="KW-0328">Glycosyltransferase</keyword>
<keyword id="KW-0342">GTP-binding</keyword>
<keyword id="KW-0460">Magnesium</keyword>
<keyword id="KW-0547">Nucleotide-binding</keyword>
<keyword id="KW-1185">Reference proteome</keyword>
<keyword id="KW-0808">Transferase</keyword>
<gene>
    <name evidence="1" type="primary">upp</name>
    <name type="ordered locus">Krad_0471</name>
</gene>
<sequence>MRLSVIDHPLVAHKLTALRDARTDSPTFRRLADELVTLLAYEATRDVAVEPHPVTTPVTATTGVRLTSPKPIVVPILRAGLGMLDGMVRLLPTAEVGFLGMIRDETTLQATTYANRLPDDLSGRQVFVLDPMLATGGTLVAAITYLLERGARDVTALCLLAAPEGLEVVRTAFDDHAQVTVVTAAVDERLDENGYIVPGLGDAGDRLYGVV</sequence>
<accession>A6W572</accession>
<evidence type="ECO:0000255" key="1">
    <source>
        <dbReference type="HAMAP-Rule" id="MF_01218"/>
    </source>
</evidence>
<organism>
    <name type="scientific">Kineococcus radiotolerans (strain ATCC BAA-149 / DSM 14245 / SRS30216)</name>
    <dbReference type="NCBI Taxonomy" id="266940"/>
    <lineage>
        <taxon>Bacteria</taxon>
        <taxon>Bacillati</taxon>
        <taxon>Actinomycetota</taxon>
        <taxon>Actinomycetes</taxon>
        <taxon>Kineosporiales</taxon>
        <taxon>Kineosporiaceae</taxon>
        <taxon>Kineococcus</taxon>
    </lineage>
</organism>
<reference key="1">
    <citation type="journal article" date="2008" name="PLoS ONE">
        <title>Survival in nuclear waste, extreme resistance, and potential applications gleaned from the genome sequence of Kineococcus radiotolerans SRS30216.</title>
        <authorList>
            <person name="Bagwell C.E."/>
            <person name="Bhat S."/>
            <person name="Hawkins G.M."/>
            <person name="Smith B.W."/>
            <person name="Biswas T."/>
            <person name="Hoover T.R."/>
            <person name="Saunders E."/>
            <person name="Han C.S."/>
            <person name="Tsodikov O.V."/>
            <person name="Shimkets L.J."/>
        </authorList>
    </citation>
    <scope>NUCLEOTIDE SEQUENCE [LARGE SCALE GENOMIC DNA]</scope>
    <source>
        <strain>ATCC BAA-149 / DSM 14245 / SRS30216</strain>
    </source>
</reference>
<dbReference type="EC" id="2.4.2.9" evidence="1"/>
<dbReference type="EMBL" id="CP000750">
    <property type="protein sequence ID" value="ABS01961.1"/>
    <property type="molecule type" value="Genomic_DNA"/>
</dbReference>
<dbReference type="RefSeq" id="WP_012085207.1">
    <property type="nucleotide sequence ID" value="NC_009664.2"/>
</dbReference>
<dbReference type="SMR" id="A6W572"/>
<dbReference type="STRING" id="266940.Krad_0471"/>
<dbReference type="KEGG" id="kra:Krad_0471"/>
<dbReference type="eggNOG" id="COG0035">
    <property type="taxonomic scope" value="Bacteria"/>
</dbReference>
<dbReference type="HOGENOM" id="CLU_067096_2_3_11"/>
<dbReference type="OrthoDB" id="9781675at2"/>
<dbReference type="UniPathway" id="UPA00574">
    <property type="reaction ID" value="UER00636"/>
</dbReference>
<dbReference type="Proteomes" id="UP000001116">
    <property type="component" value="Chromosome"/>
</dbReference>
<dbReference type="GO" id="GO:0005525">
    <property type="term" value="F:GTP binding"/>
    <property type="evidence" value="ECO:0007669"/>
    <property type="project" value="UniProtKB-KW"/>
</dbReference>
<dbReference type="GO" id="GO:0000287">
    <property type="term" value="F:magnesium ion binding"/>
    <property type="evidence" value="ECO:0007669"/>
    <property type="project" value="UniProtKB-UniRule"/>
</dbReference>
<dbReference type="GO" id="GO:0004845">
    <property type="term" value="F:uracil phosphoribosyltransferase activity"/>
    <property type="evidence" value="ECO:0007669"/>
    <property type="project" value="UniProtKB-UniRule"/>
</dbReference>
<dbReference type="GO" id="GO:0044206">
    <property type="term" value="P:UMP salvage"/>
    <property type="evidence" value="ECO:0007669"/>
    <property type="project" value="UniProtKB-UniRule"/>
</dbReference>
<dbReference type="GO" id="GO:0006223">
    <property type="term" value="P:uracil salvage"/>
    <property type="evidence" value="ECO:0007669"/>
    <property type="project" value="InterPro"/>
</dbReference>
<dbReference type="CDD" id="cd06223">
    <property type="entry name" value="PRTases_typeI"/>
    <property type="match status" value="1"/>
</dbReference>
<dbReference type="FunFam" id="3.40.50.2020:FF:000003">
    <property type="entry name" value="Uracil phosphoribosyltransferase"/>
    <property type="match status" value="1"/>
</dbReference>
<dbReference type="Gene3D" id="3.40.50.2020">
    <property type="match status" value="1"/>
</dbReference>
<dbReference type="HAMAP" id="MF_01218_B">
    <property type="entry name" value="Upp_B"/>
    <property type="match status" value="1"/>
</dbReference>
<dbReference type="InterPro" id="IPR000836">
    <property type="entry name" value="PRibTrfase_dom"/>
</dbReference>
<dbReference type="InterPro" id="IPR029057">
    <property type="entry name" value="PRTase-like"/>
</dbReference>
<dbReference type="InterPro" id="IPR034332">
    <property type="entry name" value="Upp_B"/>
</dbReference>
<dbReference type="InterPro" id="IPR050054">
    <property type="entry name" value="UPRTase/APRTase"/>
</dbReference>
<dbReference type="InterPro" id="IPR005765">
    <property type="entry name" value="Ura_phspho_trans"/>
</dbReference>
<dbReference type="NCBIfam" id="NF001097">
    <property type="entry name" value="PRK00129.1"/>
    <property type="match status" value="1"/>
</dbReference>
<dbReference type="NCBIfam" id="TIGR01091">
    <property type="entry name" value="upp"/>
    <property type="match status" value="1"/>
</dbReference>
<dbReference type="PANTHER" id="PTHR32315">
    <property type="entry name" value="ADENINE PHOSPHORIBOSYLTRANSFERASE"/>
    <property type="match status" value="1"/>
</dbReference>
<dbReference type="PANTHER" id="PTHR32315:SF4">
    <property type="entry name" value="URACIL PHOSPHORIBOSYLTRANSFERASE, CHLOROPLASTIC"/>
    <property type="match status" value="1"/>
</dbReference>
<dbReference type="Pfam" id="PF14681">
    <property type="entry name" value="UPRTase"/>
    <property type="match status" value="1"/>
</dbReference>
<dbReference type="SUPFAM" id="SSF53271">
    <property type="entry name" value="PRTase-like"/>
    <property type="match status" value="1"/>
</dbReference>
<proteinExistence type="inferred from homology"/>
<feature type="chain" id="PRO_1000085629" description="Uracil phosphoribosyltransferase">
    <location>
        <begin position="1"/>
        <end position="211"/>
    </location>
</feature>
<feature type="binding site" evidence="1">
    <location>
        <position position="78"/>
    </location>
    <ligand>
        <name>5-phospho-alpha-D-ribose 1-diphosphate</name>
        <dbReference type="ChEBI" id="CHEBI:58017"/>
    </ligand>
</feature>
<feature type="binding site" evidence="1">
    <location>
        <position position="103"/>
    </location>
    <ligand>
        <name>5-phospho-alpha-D-ribose 1-diphosphate</name>
        <dbReference type="ChEBI" id="CHEBI:58017"/>
    </ligand>
</feature>
<feature type="binding site" evidence="1">
    <location>
        <begin position="130"/>
        <end position="138"/>
    </location>
    <ligand>
        <name>5-phospho-alpha-D-ribose 1-diphosphate</name>
        <dbReference type="ChEBI" id="CHEBI:58017"/>
    </ligand>
</feature>
<feature type="binding site" evidence="1">
    <location>
        <position position="196"/>
    </location>
    <ligand>
        <name>uracil</name>
        <dbReference type="ChEBI" id="CHEBI:17568"/>
    </ligand>
</feature>
<feature type="binding site" evidence="1">
    <location>
        <begin position="201"/>
        <end position="203"/>
    </location>
    <ligand>
        <name>uracil</name>
        <dbReference type="ChEBI" id="CHEBI:17568"/>
    </ligand>
</feature>
<feature type="binding site" evidence="1">
    <location>
        <position position="202"/>
    </location>
    <ligand>
        <name>5-phospho-alpha-D-ribose 1-diphosphate</name>
        <dbReference type="ChEBI" id="CHEBI:58017"/>
    </ligand>
</feature>
<comment type="function">
    <text evidence="1">Catalyzes the conversion of uracil and 5-phospho-alpha-D-ribose 1-diphosphate (PRPP) to UMP and diphosphate.</text>
</comment>
<comment type="catalytic activity">
    <reaction evidence="1">
        <text>UMP + diphosphate = 5-phospho-alpha-D-ribose 1-diphosphate + uracil</text>
        <dbReference type="Rhea" id="RHEA:13017"/>
        <dbReference type="ChEBI" id="CHEBI:17568"/>
        <dbReference type="ChEBI" id="CHEBI:33019"/>
        <dbReference type="ChEBI" id="CHEBI:57865"/>
        <dbReference type="ChEBI" id="CHEBI:58017"/>
        <dbReference type="EC" id="2.4.2.9"/>
    </reaction>
</comment>
<comment type="cofactor">
    <cofactor evidence="1">
        <name>Mg(2+)</name>
        <dbReference type="ChEBI" id="CHEBI:18420"/>
    </cofactor>
    <text evidence="1">Binds 1 Mg(2+) ion per subunit. The magnesium is bound as Mg-PRPP.</text>
</comment>
<comment type="activity regulation">
    <text evidence="1">Allosterically activated by GTP.</text>
</comment>
<comment type="pathway">
    <text evidence="1">Pyrimidine metabolism; UMP biosynthesis via salvage pathway; UMP from uracil: step 1/1.</text>
</comment>
<comment type="similarity">
    <text evidence="1">Belongs to the UPRTase family.</text>
</comment>
<protein>
    <recommendedName>
        <fullName evidence="1">Uracil phosphoribosyltransferase</fullName>
        <ecNumber evidence="1">2.4.2.9</ecNumber>
    </recommendedName>
    <alternativeName>
        <fullName evidence="1">UMP pyrophosphorylase</fullName>
    </alternativeName>
    <alternativeName>
        <fullName evidence="1">UPRTase</fullName>
    </alternativeName>
</protein>
<name>UPP_KINRD</name>